<reference key="1">
    <citation type="journal article" date="2005" name="J. Infect. Dis.">
        <title>Genome sequence of a serotype M28 strain of group A Streptococcus: potential new insights into puerperal sepsis and bacterial disease specificity.</title>
        <authorList>
            <person name="Green N.M."/>
            <person name="Zhang S."/>
            <person name="Porcella S.F."/>
            <person name="Nagiec M.J."/>
            <person name="Barbian K.D."/>
            <person name="Beres S.B."/>
            <person name="Lefebvre R.B."/>
            <person name="Musser J.M."/>
        </authorList>
    </citation>
    <scope>NUCLEOTIDE SEQUENCE [LARGE SCALE GENOMIC DNA]</scope>
    <source>
        <strain>MGAS6180</strain>
    </source>
</reference>
<protein>
    <recommendedName>
        <fullName evidence="1">UPF0371 protein M28_Spy1076</fullName>
    </recommendedName>
</protein>
<proteinExistence type="inferred from homology"/>
<feature type="chain" id="PRO_0000245624" description="UPF0371 protein M28_Spy1076">
    <location>
        <begin position="1"/>
        <end position="494"/>
    </location>
</feature>
<gene>
    <name type="ordered locus">M28_Spy1076</name>
</gene>
<evidence type="ECO:0000255" key="1">
    <source>
        <dbReference type="HAMAP-Rule" id="MF_01567"/>
    </source>
</evidence>
<evidence type="ECO:0000305" key="2"/>
<accession>Q48SX1</accession>
<dbReference type="EMBL" id="CP000056">
    <property type="protein sequence ID" value="AAX72189.1"/>
    <property type="status" value="ALT_INIT"/>
    <property type="molecule type" value="Genomic_DNA"/>
</dbReference>
<dbReference type="RefSeq" id="WP_021340806.1">
    <property type="nucleotide sequence ID" value="NC_007296.2"/>
</dbReference>
<dbReference type="SMR" id="Q48SX1"/>
<dbReference type="KEGG" id="spb:M28_Spy1076"/>
<dbReference type="HOGENOM" id="CLU_046981_0_0_9"/>
<dbReference type="Gene3D" id="1.20.1570.10">
    <property type="entry name" value="dip2346 domain like"/>
    <property type="match status" value="1"/>
</dbReference>
<dbReference type="Gene3D" id="3.10.630.10">
    <property type="entry name" value="dip2346 domain like"/>
    <property type="match status" value="1"/>
</dbReference>
<dbReference type="Gene3D" id="3.40.140.40">
    <property type="entry name" value="Domain of unknown function (DUF1846), C-terminal subdomain"/>
    <property type="match status" value="1"/>
</dbReference>
<dbReference type="HAMAP" id="MF_01567">
    <property type="entry name" value="UPF0371"/>
    <property type="match status" value="1"/>
</dbReference>
<dbReference type="InterPro" id="IPR014999">
    <property type="entry name" value="DUF1846"/>
</dbReference>
<dbReference type="InterPro" id="IPR048441">
    <property type="entry name" value="DUF1846_C"/>
</dbReference>
<dbReference type="InterPro" id="IPR048496">
    <property type="entry name" value="DUF1846_N"/>
</dbReference>
<dbReference type="NCBIfam" id="NF010184">
    <property type="entry name" value="PRK13663.1"/>
    <property type="match status" value="1"/>
</dbReference>
<dbReference type="Pfam" id="PF08903">
    <property type="entry name" value="DUF1846"/>
    <property type="match status" value="1"/>
</dbReference>
<dbReference type="Pfam" id="PF20921">
    <property type="entry name" value="DUF1846_C"/>
    <property type="match status" value="1"/>
</dbReference>
<dbReference type="PIRSF" id="PIRSF033132">
    <property type="entry name" value="DUF1846"/>
    <property type="match status" value="1"/>
</dbReference>
<name>Y1076_STRPM</name>
<organism>
    <name type="scientific">Streptococcus pyogenes serotype M28 (strain MGAS6180)</name>
    <dbReference type="NCBI Taxonomy" id="319701"/>
    <lineage>
        <taxon>Bacteria</taxon>
        <taxon>Bacillati</taxon>
        <taxon>Bacillota</taxon>
        <taxon>Bacilli</taxon>
        <taxon>Lactobacillales</taxon>
        <taxon>Streptococcaceae</taxon>
        <taxon>Streptococcus</taxon>
    </lineage>
</organism>
<comment type="similarity">
    <text evidence="1">Belongs to the UPF0371 family.</text>
</comment>
<comment type="sequence caution" evidence="2">
    <conflict type="erroneous initiation">
        <sequence resource="EMBL-CDS" id="AAX72189"/>
    </conflict>
</comment>
<sequence>MKTIAFDSNKYLNLQRDHILERISQFDGKLYMEFGGKMLEDYHAARVLPGYEPDNKIKLLKELKEQVEIVIAINANNIEHSKARGDLGISYDQEVFRLIDKFNTLDIYVGSVVITQYNNQPAADAFRKQLKKNGIASYLHYPIKSYPTDINHIISSEGMGKNDYIKTSRNLIVVTAPGPGSGKLATCISQMYHDQINGVKSGYAKFETFPVWNLPLHHPVNLAYEAATADLDDVNMIDPFHLETYGKTAVNYNRDIEVFPVLNRTFERILSKSPYASPTDMGVNMVGFSIVNEEAAIEASKQEIIRRYYQTLVDFKAERVTESAVKKIELLMNDIGVTPDDRHVTVAAHQKAEQTGQPALALQLPNGQIVTGKTSELFGPTAAVIINAIKTLAKIDKTTHLIEPEYVKPIQGLKVNHLGSHNPRLHSNEILIALAITAMTSEEANLAMKELGNLKGSEAHSTVILTEEDKNVLRKLGVNITFDPVYQHHKLYRK</sequence>